<feature type="chain" id="PRO_1000054185" description="GTP 3',8-cyclase">
    <location>
        <begin position="1"/>
        <end position="319"/>
    </location>
</feature>
<feature type="domain" description="Radical SAM core" evidence="2">
    <location>
        <begin position="4"/>
        <end position="227"/>
    </location>
</feature>
<feature type="binding site" evidence="1">
    <location>
        <position position="13"/>
    </location>
    <ligand>
        <name>GTP</name>
        <dbReference type="ChEBI" id="CHEBI:37565"/>
    </ligand>
</feature>
<feature type="binding site" evidence="1">
    <location>
        <position position="20"/>
    </location>
    <ligand>
        <name>[4Fe-4S] cluster</name>
        <dbReference type="ChEBI" id="CHEBI:49883"/>
        <label>1</label>
        <note>4Fe-4S-S-AdoMet</note>
    </ligand>
</feature>
<feature type="binding site" evidence="1">
    <location>
        <position position="24"/>
    </location>
    <ligand>
        <name>[4Fe-4S] cluster</name>
        <dbReference type="ChEBI" id="CHEBI:49883"/>
        <label>1</label>
        <note>4Fe-4S-S-AdoMet</note>
    </ligand>
</feature>
<feature type="binding site" evidence="1">
    <location>
        <position position="26"/>
    </location>
    <ligand>
        <name>S-adenosyl-L-methionine</name>
        <dbReference type="ChEBI" id="CHEBI:59789"/>
    </ligand>
</feature>
<feature type="binding site" evidence="1">
    <location>
        <position position="27"/>
    </location>
    <ligand>
        <name>[4Fe-4S] cluster</name>
        <dbReference type="ChEBI" id="CHEBI:49883"/>
        <label>1</label>
        <note>4Fe-4S-S-AdoMet</note>
    </ligand>
</feature>
<feature type="binding site" evidence="1">
    <location>
        <position position="63"/>
    </location>
    <ligand>
        <name>GTP</name>
        <dbReference type="ChEBI" id="CHEBI:37565"/>
    </ligand>
</feature>
<feature type="binding site" evidence="1">
    <location>
        <position position="67"/>
    </location>
    <ligand>
        <name>S-adenosyl-L-methionine</name>
        <dbReference type="ChEBI" id="CHEBI:59789"/>
    </ligand>
</feature>
<feature type="binding site" evidence="1">
    <location>
        <position position="94"/>
    </location>
    <ligand>
        <name>GTP</name>
        <dbReference type="ChEBI" id="CHEBI:37565"/>
    </ligand>
</feature>
<feature type="binding site" evidence="1">
    <location>
        <position position="118"/>
    </location>
    <ligand>
        <name>S-adenosyl-L-methionine</name>
        <dbReference type="ChEBI" id="CHEBI:59789"/>
    </ligand>
</feature>
<feature type="binding site" evidence="1">
    <location>
        <position position="155"/>
    </location>
    <ligand>
        <name>GTP</name>
        <dbReference type="ChEBI" id="CHEBI:37565"/>
    </ligand>
</feature>
<feature type="binding site" evidence="1">
    <location>
        <position position="189"/>
    </location>
    <ligand>
        <name>S-adenosyl-L-methionine</name>
        <dbReference type="ChEBI" id="CHEBI:59789"/>
    </ligand>
</feature>
<feature type="binding site" evidence="1">
    <location>
        <position position="249"/>
    </location>
    <ligand>
        <name>[4Fe-4S] cluster</name>
        <dbReference type="ChEBI" id="CHEBI:49883"/>
        <label>2</label>
        <note>4Fe-4S-substrate</note>
    </ligand>
</feature>
<feature type="binding site" evidence="1">
    <location>
        <position position="252"/>
    </location>
    <ligand>
        <name>[4Fe-4S] cluster</name>
        <dbReference type="ChEBI" id="CHEBI:49883"/>
        <label>2</label>
        <note>4Fe-4S-substrate</note>
    </ligand>
</feature>
<feature type="binding site" evidence="1">
    <location>
        <begin position="254"/>
        <end position="256"/>
    </location>
    <ligand>
        <name>GTP</name>
        <dbReference type="ChEBI" id="CHEBI:37565"/>
    </ligand>
</feature>
<feature type="binding site" evidence="1">
    <location>
        <position position="266"/>
    </location>
    <ligand>
        <name>[4Fe-4S] cluster</name>
        <dbReference type="ChEBI" id="CHEBI:49883"/>
        <label>2</label>
        <note>4Fe-4S-substrate</note>
    </ligand>
</feature>
<organism>
    <name type="scientific">Clostridium botulinum (strain ATCC 19397 / Type A)</name>
    <dbReference type="NCBI Taxonomy" id="441770"/>
    <lineage>
        <taxon>Bacteria</taxon>
        <taxon>Bacillati</taxon>
        <taxon>Bacillota</taxon>
        <taxon>Clostridia</taxon>
        <taxon>Eubacteriales</taxon>
        <taxon>Clostridiaceae</taxon>
        <taxon>Clostridium</taxon>
    </lineage>
</organism>
<dbReference type="EC" id="4.1.99.22" evidence="1"/>
<dbReference type="EMBL" id="CP000726">
    <property type="protein sequence ID" value="ABS33883.1"/>
    <property type="molecule type" value="Genomic_DNA"/>
</dbReference>
<dbReference type="RefSeq" id="WP_011986479.1">
    <property type="nucleotide sequence ID" value="NC_009697.1"/>
</dbReference>
<dbReference type="SMR" id="A7FUZ6"/>
<dbReference type="GeneID" id="5186195"/>
<dbReference type="KEGG" id="cba:CLB_1878"/>
<dbReference type="HOGENOM" id="CLU_009273_0_1_9"/>
<dbReference type="UniPathway" id="UPA00344"/>
<dbReference type="GO" id="GO:0051539">
    <property type="term" value="F:4 iron, 4 sulfur cluster binding"/>
    <property type="evidence" value="ECO:0007669"/>
    <property type="project" value="UniProtKB-UniRule"/>
</dbReference>
<dbReference type="GO" id="GO:0061799">
    <property type="term" value="F:cyclic pyranopterin monophosphate synthase activity"/>
    <property type="evidence" value="ECO:0007669"/>
    <property type="project" value="TreeGrafter"/>
</dbReference>
<dbReference type="GO" id="GO:0061798">
    <property type="term" value="F:GTP 3',8'-cyclase activity"/>
    <property type="evidence" value="ECO:0007669"/>
    <property type="project" value="UniProtKB-UniRule"/>
</dbReference>
<dbReference type="GO" id="GO:0005525">
    <property type="term" value="F:GTP binding"/>
    <property type="evidence" value="ECO:0007669"/>
    <property type="project" value="UniProtKB-UniRule"/>
</dbReference>
<dbReference type="GO" id="GO:0046872">
    <property type="term" value="F:metal ion binding"/>
    <property type="evidence" value="ECO:0007669"/>
    <property type="project" value="UniProtKB-KW"/>
</dbReference>
<dbReference type="GO" id="GO:1904047">
    <property type="term" value="F:S-adenosyl-L-methionine binding"/>
    <property type="evidence" value="ECO:0007669"/>
    <property type="project" value="UniProtKB-UniRule"/>
</dbReference>
<dbReference type="GO" id="GO:0006777">
    <property type="term" value="P:Mo-molybdopterin cofactor biosynthetic process"/>
    <property type="evidence" value="ECO:0007669"/>
    <property type="project" value="UniProtKB-UniRule"/>
</dbReference>
<dbReference type="CDD" id="cd01335">
    <property type="entry name" value="Radical_SAM"/>
    <property type="match status" value="1"/>
</dbReference>
<dbReference type="CDD" id="cd21117">
    <property type="entry name" value="Twitch_MoaA"/>
    <property type="match status" value="1"/>
</dbReference>
<dbReference type="Gene3D" id="3.20.20.70">
    <property type="entry name" value="Aldolase class I"/>
    <property type="match status" value="1"/>
</dbReference>
<dbReference type="HAMAP" id="MF_01225_B">
    <property type="entry name" value="MoaA_B"/>
    <property type="match status" value="1"/>
</dbReference>
<dbReference type="InterPro" id="IPR013785">
    <property type="entry name" value="Aldolase_TIM"/>
</dbReference>
<dbReference type="InterPro" id="IPR006638">
    <property type="entry name" value="Elp3/MiaA/NifB-like_rSAM"/>
</dbReference>
<dbReference type="InterPro" id="IPR013483">
    <property type="entry name" value="MoaA"/>
</dbReference>
<dbReference type="InterPro" id="IPR000385">
    <property type="entry name" value="MoaA_NifB_PqqE_Fe-S-bd_CS"/>
</dbReference>
<dbReference type="InterPro" id="IPR010505">
    <property type="entry name" value="MoaA_twitch"/>
</dbReference>
<dbReference type="InterPro" id="IPR050105">
    <property type="entry name" value="MoCo_biosynth_MoaA/MoaC"/>
</dbReference>
<dbReference type="InterPro" id="IPR007197">
    <property type="entry name" value="rSAM"/>
</dbReference>
<dbReference type="NCBIfam" id="TIGR02666">
    <property type="entry name" value="moaA"/>
    <property type="match status" value="1"/>
</dbReference>
<dbReference type="NCBIfam" id="NF001199">
    <property type="entry name" value="PRK00164.2-1"/>
    <property type="match status" value="1"/>
</dbReference>
<dbReference type="PANTHER" id="PTHR22960:SF0">
    <property type="entry name" value="MOLYBDENUM COFACTOR BIOSYNTHESIS PROTEIN 1"/>
    <property type="match status" value="1"/>
</dbReference>
<dbReference type="PANTHER" id="PTHR22960">
    <property type="entry name" value="MOLYBDOPTERIN COFACTOR SYNTHESIS PROTEIN A"/>
    <property type="match status" value="1"/>
</dbReference>
<dbReference type="Pfam" id="PF13353">
    <property type="entry name" value="Fer4_12"/>
    <property type="match status" value="1"/>
</dbReference>
<dbReference type="Pfam" id="PF06463">
    <property type="entry name" value="Mob_synth_C"/>
    <property type="match status" value="1"/>
</dbReference>
<dbReference type="Pfam" id="PF04055">
    <property type="entry name" value="Radical_SAM"/>
    <property type="match status" value="1"/>
</dbReference>
<dbReference type="SFLD" id="SFLDG01383">
    <property type="entry name" value="cyclic_pyranopterin_phosphate"/>
    <property type="match status" value="1"/>
</dbReference>
<dbReference type="SFLD" id="SFLDS00029">
    <property type="entry name" value="Radical_SAM"/>
    <property type="match status" value="1"/>
</dbReference>
<dbReference type="SMART" id="SM00729">
    <property type="entry name" value="Elp3"/>
    <property type="match status" value="1"/>
</dbReference>
<dbReference type="SUPFAM" id="SSF102114">
    <property type="entry name" value="Radical SAM enzymes"/>
    <property type="match status" value="1"/>
</dbReference>
<dbReference type="PROSITE" id="PS01305">
    <property type="entry name" value="MOAA_NIFB_PQQE"/>
    <property type="match status" value="1"/>
</dbReference>
<dbReference type="PROSITE" id="PS51918">
    <property type="entry name" value="RADICAL_SAM"/>
    <property type="match status" value="1"/>
</dbReference>
<accession>A7FUZ6</accession>
<sequence>MLDKHGRKINYLRVSVTDRCNLRCVYCMPPEGIVKKEHDNIMRYEEIFKVVKSASLLGVNKIRFTGGEPLILKDIDKLIYNTSKINSIKDIAMTTNAILLEDMVEELKKAGLKRVNISLDSLKEDRFKSITRGGDINKVFKSIEKSLSIGMKPIKINTVIMKGINDDEIDDFMNLTKKYPISVRFIELMPIGEGRKLYKDGYISSEEIISKHSDLIPVETEKSSTALLYKFKESKENIGFISPMSCKFCSGCNRVRLTSEGTLKPCLHSEKEVNLKNYVGNNQALLSKINETIYNKPLEHHMIEEKESKSKKMMYQIGG</sequence>
<reference key="1">
    <citation type="journal article" date="2007" name="PLoS ONE">
        <title>Analysis of the neurotoxin complex genes in Clostridium botulinum A1-A4 and B1 strains: BoNT/A3, /Ba4 and /B1 clusters are located within plasmids.</title>
        <authorList>
            <person name="Smith T.J."/>
            <person name="Hill K.K."/>
            <person name="Foley B.T."/>
            <person name="Detter J.C."/>
            <person name="Munk A.C."/>
            <person name="Bruce D.C."/>
            <person name="Doggett N.A."/>
            <person name="Smith L.A."/>
            <person name="Marks J.D."/>
            <person name="Xie G."/>
            <person name="Brettin T.S."/>
        </authorList>
    </citation>
    <scope>NUCLEOTIDE SEQUENCE [LARGE SCALE GENOMIC DNA]</scope>
    <source>
        <strain>ATCC 19397 / Type A</strain>
    </source>
</reference>
<proteinExistence type="inferred from homology"/>
<keyword id="KW-0004">4Fe-4S</keyword>
<keyword id="KW-0342">GTP-binding</keyword>
<keyword id="KW-0408">Iron</keyword>
<keyword id="KW-0411">Iron-sulfur</keyword>
<keyword id="KW-0456">Lyase</keyword>
<keyword id="KW-0479">Metal-binding</keyword>
<keyword id="KW-0501">Molybdenum cofactor biosynthesis</keyword>
<keyword id="KW-0547">Nucleotide-binding</keyword>
<keyword id="KW-0949">S-adenosyl-L-methionine</keyword>
<evidence type="ECO:0000255" key="1">
    <source>
        <dbReference type="HAMAP-Rule" id="MF_01225"/>
    </source>
</evidence>
<evidence type="ECO:0000255" key="2">
    <source>
        <dbReference type="PROSITE-ProRule" id="PRU01266"/>
    </source>
</evidence>
<comment type="function">
    <text evidence="1">Catalyzes the cyclization of GTP to (8S)-3',8-cyclo-7,8-dihydroguanosine 5'-triphosphate.</text>
</comment>
<comment type="catalytic activity">
    <reaction evidence="1">
        <text>GTP + AH2 + S-adenosyl-L-methionine = (8S)-3',8-cyclo-7,8-dihydroguanosine 5'-triphosphate + 5'-deoxyadenosine + L-methionine + A + H(+)</text>
        <dbReference type="Rhea" id="RHEA:49576"/>
        <dbReference type="ChEBI" id="CHEBI:13193"/>
        <dbReference type="ChEBI" id="CHEBI:15378"/>
        <dbReference type="ChEBI" id="CHEBI:17319"/>
        <dbReference type="ChEBI" id="CHEBI:17499"/>
        <dbReference type="ChEBI" id="CHEBI:37565"/>
        <dbReference type="ChEBI" id="CHEBI:57844"/>
        <dbReference type="ChEBI" id="CHEBI:59789"/>
        <dbReference type="ChEBI" id="CHEBI:131766"/>
        <dbReference type="EC" id="4.1.99.22"/>
    </reaction>
</comment>
<comment type="cofactor">
    <cofactor evidence="1">
        <name>[4Fe-4S] cluster</name>
        <dbReference type="ChEBI" id="CHEBI:49883"/>
    </cofactor>
    <text evidence="1">Binds 2 [4Fe-4S] clusters. Binds 1 [4Fe-4S] cluster coordinated with 3 cysteines and an exchangeable S-adenosyl-L-methionine and 1 [4Fe-4S] cluster coordinated with 3 cysteines and the GTP-derived substrate.</text>
</comment>
<comment type="pathway">
    <text evidence="1">Cofactor biosynthesis; molybdopterin biosynthesis.</text>
</comment>
<comment type="subunit">
    <text evidence="1">Monomer and homodimer.</text>
</comment>
<comment type="similarity">
    <text evidence="1">Belongs to the radical SAM superfamily. MoaA family.</text>
</comment>
<gene>
    <name evidence="1" type="primary">moaA</name>
    <name type="ordered locus">CLB_1878</name>
</gene>
<name>MOAA_CLOB1</name>
<protein>
    <recommendedName>
        <fullName evidence="1">GTP 3',8-cyclase</fullName>
        <ecNumber evidence="1">4.1.99.22</ecNumber>
    </recommendedName>
    <alternativeName>
        <fullName evidence="1">Molybdenum cofactor biosynthesis protein A</fullName>
    </alternativeName>
</protein>